<protein>
    <recommendedName>
        <fullName>DEAD-box ATP-dependent RNA helicase 41</fullName>
        <ecNumber>3.6.4.13</ecNumber>
    </recommendedName>
</protein>
<dbReference type="EC" id="3.6.4.13"/>
<dbReference type="EMBL" id="AC011664">
    <property type="status" value="NOT_ANNOTATED_CDS"/>
    <property type="molecule type" value="Genomic_DNA"/>
</dbReference>
<dbReference type="EMBL" id="CP002686">
    <property type="protein sequence ID" value="AEE73756.1"/>
    <property type="molecule type" value="Genomic_DNA"/>
</dbReference>
<dbReference type="EMBL" id="CP002686">
    <property type="protein sequence ID" value="AEE73757.1"/>
    <property type="molecule type" value="Genomic_DNA"/>
</dbReference>
<dbReference type="EMBL" id="CP002686">
    <property type="protein sequence ID" value="AEE73758.1"/>
    <property type="molecule type" value="Genomic_DNA"/>
</dbReference>
<dbReference type="EMBL" id="AY065172">
    <property type="protein sequence ID" value="AAL38348.1"/>
    <property type="molecule type" value="mRNA"/>
</dbReference>
<dbReference type="EMBL" id="BT001184">
    <property type="protein sequence ID" value="AAN65071.1"/>
    <property type="molecule type" value="mRNA"/>
</dbReference>
<dbReference type="RefSeq" id="NP_001030621.1">
    <molecule id="Q3EBD3-1"/>
    <property type="nucleotide sequence ID" value="NM_001035544.2"/>
</dbReference>
<dbReference type="RefSeq" id="NP_850499.1">
    <molecule id="Q3EBD3-2"/>
    <property type="nucleotide sequence ID" value="NM_180168.2"/>
</dbReference>
<dbReference type="RefSeq" id="NP_974208.1">
    <molecule id="Q3EBD3-1"/>
    <property type="nucleotide sequence ID" value="NM_202479.2"/>
</dbReference>
<dbReference type="SMR" id="Q3EBD3"/>
<dbReference type="BioGRID" id="6488">
    <property type="interactions" value="2"/>
</dbReference>
<dbReference type="FunCoup" id="Q3EBD3">
    <property type="interactions" value="1956"/>
</dbReference>
<dbReference type="IntAct" id="Q3EBD3">
    <property type="interactions" value="1"/>
</dbReference>
<dbReference type="STRING" id="3702.Q3EBD3"/>
<dbReference type="PaxDb" id="3702-AT3G02065.2"/>
<dbReference type="ProteomicsDB" id="236857">
    <molecule id="Q3EBD3-1"/>
</dbReference>
<dbReference type="EnsemblPlants" id="AT3G02065.1">
    <molecule id="Q3EBD3-2"/>
    <property type="protein sequence ID" value="AT3G02065.1"/>
    <property type="gene ID" value="AT3G02065"/>
</dbReference>
<dbReference type="EnsemblPlants" id="AT3G02065.2">
    <molecule id="Q3EBD3-1"/>
    <property type="protein sequence ID" value="AT3G02065.2"/>
    <property type="gene ID" value="AT3G02065"/>
</dbReference>
<dbReference type="EnsemblPlants" id="AT3G02065.3">
    <molecule id="Q3EBD3-1"/>
    <property type="protein sequence ID" value="AT3G02065.3"/>
    <property type="gene ID" value="AT3G02065"/>
</dbReference>
<dbReference type="GeneID" id="821155"/>
<dbReference type="Gramene" id="AT3G02065.1">
    <molecule id="Q3EBD3-2"/>
    <property type="protein sequence ID" value="AT3G02065.1"/>
    <property type="gene ID" value="AT3G02065"/>
</dbReference>
<dbReference type="Gramene" id="AT3G02065.2">
    <molecule id="Q3EBD3-1"/>
    <property type="protein sequence ID" value="AT3G02065.2"/>
    <property type="gene ID" value="AT3G02065"/>
</dbReference>
<dbReference type="Gramene" id="AT3G02065.3">
    <molecule id="Q3EBD3-1"/>
    <property type="protein sequence ID" value="AT3G02065.3"/>
    <property type="gene ID" value="AT3G02065"/>
</dbReference>
<dbReference type="KEGG" id="ath:AT3G02065"/>
<dbReference type="Araport" id="AT3G02065"/>
<dbReference type="TAIR" id="AT3G02065"/>
<dbReference type="eggNOG" id="KOG0331">
    <property type="taxonomic scope" value="Eukaryota"/>
</dbReference>
<dbReference type="InParanoid" id="Q3EBD3"/>
<dbReference type="OMA" id="DESFCIR"/>
<dbReference type="OrthoDB" id="360161at2759"/>
<dbReference type="PhylomeDB" id="Q3EBD3"/>
<dbReference type="PRO" id="PR:Q3EBD3"/>
<dbReference type="Proteomes" id="UP000006548">
    <property type="component" value="Chromosome 3"/>
</dbReference>
<dbReference type="ExpressionAtlas" id="Q3EBD3">
    <property type="expression patterns" value="baseline and differential"/>
</dbReference>
<dbReference type="GO" id="GO:0005524">
    <property type="term" value="F:ATP binding"/>
    <property type="evidence" value="ECO:0007669"/>
    <property type="project" value="UniProtKB-KW"/>
</dbReference>
<dbReference type="GO" id="GO:0016887">
    <property type="term" value="F:ATP hydrolysis activity"/>
    <property type="evidence" value="ECO:0007669"/>
    <property type="project" value="RHEA"/>
</dbReference>
<dbReference type="GO" id="GO:0003723">
    <property type="term" value="F:RNA binding"/>
    <property type="evidence" value="ECO:0007669"/>
    <property type="project" value="UniProtKB-KW"/>
</dbReference>
<dbReference type="GO" id="GO:0003724">
    <property type="term" value="F:RNA helicase activity"/>
    <property type="evidence" value="ECO:0007669"/>
    <property type="project" value="UniProtKB-EC"/>
</dbReference>
<dbReference type="GO" id="GO:0008270">
    <property type="term" value="F:zinc ion binding"/>
    <property type="evidence" value="ECO:0007669"/>
    <property type="project" value="UniProtKB-KW"/>
</dbReference>
<dbReference type="CDD" id="cd17962">
    <property type="entry name" value="DEADc_DDX59"/>
    <property type="match status" value="1"/>
</dbReference>
<dbReference type="CDD" id="cd18787">
    <property type="entry name" value="SF2_C_DEAD"/>
    <property type="match status" value="1"/>
</dbReference>
<dbReference type="CDD" id="cd23022">
    <property type="entry name" value="zf-HIT_DDX59"/>
    <property type="match status" value="1"/>
</dbReference>
<dbReference type="FunFam" id="3.30.60.220:FF:000002">
    <property type="entry name" value="DEAD-box ATP-dependent RNA helicase 41"/>
    <property type="match status" value="1"/>
</dbReference>
<dbReference type="Gene3D" id="3.30.60.220">
    <property type="match status" value="1"/>
</dbReference>
<dbReference type="Gene3D" id="3.40.50.300">
    <property type="entry name" value="P-loop containing nucleotide triphosphate hydrolases"/>
    <property type="match status" value="2"/>
</dbReference>
<dbReference type="InterPro" id="IPR011545">
    <property type="entry name" value="DEAD/DEAH_box_helicase_dom"/>
</dbReference>
<dbReference type="InterPro" id="IPR014001">
    <property type="entry name" value="Helicase_ATP-bd"/>
</dbReference>
<dbReference type="InterPro" id="IPR001650">
    <property type="entry name" value="Helicase_C-like"/>
</dbReference>
<dbReference type="InterPro" id="IPR027417">
    <property type="entry name" value="P-loop_NTPase"/>
</dbReference>
<dbReference type="InterPro" id="IPR014014">
    <property type="entry name" value="RNA_helicase_DEAD_Q_motif"/>
</dbReference>
<dbReference type="InterPro" id="IPR007529">
    <property type="entry name" value="Znf_HIT"/>
</dbReference>
<dbReference type="PANTHER" id="PTHR47958">
    <property type="entry name" value="ATP-DEPENDENT RNA HELICASE DBP3"/>
    <property type="match status" value="1"/>
</dbReference>
<dbReference type="Pfam" id="PF00270">
    <property type="entry name" value="DEAD"/>
    <property type="match status" value="1"/>
</dbReference>
<dbReference type="Pfam" id="PF00271">
    <property type="entry name" value="Helicase_C"/>
    <property type="match status" value="1"/>
</dbReference>
<dbReference type="Pfam" id="PF04438">
    <property type="entry name" value="zf-HIT"/>
    <property type="match status" value="1"/>
</dbReference>
<dbReference type="SMART" id="SM00487">
    <property type="entry name" value="DEXDc"/>
    <property type="match status" value="1"/>
</dbReference>
<dbReference type="SMART" id="SM00490">
    <property type="entry name" value="HELICc"/>
    <property type="match status" value="1"/>
</dbReference>
<dbReference type="SUPFAM" id="SSF52540">
    <property type="entry name" value="P-loop containing nucleoside triphosphate hydrolases"/>
    <property type="match status" value="2"/>
</dbReference>
<dbReference type="PROSITE" id="PS51192">
    <property type="entry name" value="HELICASE_ATP_BIND_1"/>
    <property type="match status" value="1"/>
</dbReference>
<dbReference type="PROSITE" id="PS51194">
    <property type="entry name" value="HELICASE_CTER"/>
    <property type="match status" value="1"/>
</dbReference>
<dbReference type="PROSITE" id="PS51195">
    <property type="entry name" value="Q_MOTIF"/>
    <property type="match status" value="1"/>
</dbReference>
<proteinExistence type="evidence at transcript level"/>
<feature type="chain" id="PRO_0000239181" description="DEAD-box ATP-dependent RNA helicase 41">
    <location>
        <begin position="1"/>
        <end position="505"/>
    </location>
</feature>
<feature type="domain" description="Helicase ATP-binding" evidence="1">
    <location>
        <begin position="141"/>
        <end position="318"/>
    </location>
</feature>
<feature type="domain" description="Helicase C-terminal" evidence="2">
    <location>
        <begin position="342"/>
        <end position="492"/>
    </location>
</feature>
<feature type="zinc finger region" description="HIT-type">
    <location>
        <begin position="27"/>
        <end position="56"/>
    </location>
</feature>
<feature type="short sequence motif" description="Q motif">
    <location>
        <begin position="110"/>
        <end position="138"/>
    </location>
</feature>
<feature type="short sequence motif" description="DEAD box">
    <location>
        <begin position="267"/>
        <end position="270"/>
    </location>
</feature>
<feature type="binding site" evidence="1">
    <location>
        <begin position="154"/>
        <end position="161"/>
    </location>
    <ligand>
        <name>ATP</name>
        <dbReference type="ChEBI" id="CHEBI:30616"/>
    </ligand>
</feature>
<feature type="splice variant" id="VSP_019106" description="In isoform 2." evidence="3">
    <location>
        <begin position="1"/>
        <end position="137"/>
    </location>
</feature>
<gene>
    <name type="primary">RH41</name>
    <name type="ordered locus">At3g02065</name>
    <name type="ORF">F1C9.15</name>
</gene>
<organism>
    <name type="scientific">Arabidopsis thaliana</name>
    <name type="common">Mouse-ear cress</name>
    <dbReference type="NCBI Taxonomy" id="3702"/>
    <lineage>
        <taxon>Eukaryota</taxon>
        <taxon>Viridiplantae</taxon>
        <taxon>Streptophyta</taxon>
        <taxon>Embryophyta</taxon>
        <taxon>Tracheophyta</taxon>
        <taxon>Spermatophyta</taxon>
        <taxon>Magnoliopsida</taxon>
        <taxon>eudicotyledons</taxon>
        <taxon>Gunneridae</taxon>
        <taxon>Pentapetalae</taxon>
        <taxon>rosids</taxon>
        <taxon>malvids</taxon>
        <taxon>Brassicales</taxon>
        <taxon>Brassicaceae</taxon>
        <taxon>Camelineae</taxon>
        <taxon>Arabidopsis</taxon>
    </lineage>
</organism>
<name>RH41_ARATH</name>
<comment type="catalytic activity">
    <reaction>
        <text>ATP + H2O = ADP + phosphate + H(+)</text>
        <dbReference type="Rhea" id="RHEA:13065"/>
        <dbReference type="ChEBI" id="CHEBI:15377"/>
        <dbReference type="ChEBI" id="CHEBI:15378"/>
        <dbReference type="ChEBI" id="CHEBI:30616"/>
        <dbReference type="ChEBI" id="CHEBI:43474"/>
        <dbReference type="ChEBI" id="CHEBI:456216"/>
        <dbReference type="EC" id="3.6.4.13"/>
    </reaction>
</comment>
<comment type="alternative products">
    <event type="alternative splicing"/>
    <isoform>
        <id>Q3EBD3-1</id>
        <name>1</name>
        <sequence type="displayed"/>
    </isoform>
    <isoform>
        <id>Q3EBD3-2</id>
        <name>2</name>
        <sequence type="described" ref="VSP_019106"/>
    </isoform>
</comment>
<comment type="domain">
    <text>The Q motif is unique to and characteristic of the DEAD box family of RNA helicases and controls ATP binding and hydrolysis.</text>
</comment>
<comment type="miscellaneous">
    <molecule>Isoform 2</molecule>
    <text evidence="4">May be due to an intron retention.</text>
</comment>
<comment type="similarity">
    <text evidence="4">Belongs to the DEAD box helicase family. DDX59 subfamily.</text>
</comment>
<reference key="1">
    <citation type="journal article" date="2000" name="Nature">
        <title>Sequence and analysis of chromosome 3 of the plant Arabidopsis thaliana.</title>
        <authorList>
            <person name="Salanoubat M."/>
            <person name="Lemcke K."/>
            <person name="Rieger M."/>
            <person name="Ansorge W."/>
            <person name="Unseld M."/>
            <person name="Fartmann B."/>
            <person name="Valle G."/>
            <person name="Bloecker H."/>
            <person name="Perez-Alonso M."/>
            <person name="Obermaier B."/>
            <person name="Delseny M."/>
            <person name="Boutry M."/>
            <person name="Grivell L.A."/>
            <person name="Mache R."/>
            <person name="Puigdomenech P."/>
            <person name="De Simone V."/>
            <person name="Choisne N."/>
            <person name="Artiguenave F."/>
            <person name="Robert C."/>
            <person name="Brottier P."/>
            <person name="Wincker P."/>
            <person name="Cattolico L."/>
            <person name="Weissenbach J."/>
            <person name="Saurin W."/>
            <person name="Quetier F."/>
            <person name="Schaefer M."/>
            <person name="Mueller-Auer S."/>
            <person name="Gabel C."/>
            <person name="Fuchs M."/>
            <person name="Benes V."/>
            <person name="Wurmbach E."/>
            <person name="Drzonek H."/>
            <person name="Erfle H."/>
            <person name="Jordan N."/>
            <person name="Bangert S."/>
            <person name="Wiedelmann R."/>
            <person name="Kranz H."/>
            <person name="Voss H."/>
            <person name="Holland R."/>
            <person name="Brandt P."/>
            <person name="Nyakatura G."/>
            <person name="Vezzi A."/>
            <person name="D'Angelo M."/>
            <person name="Pallavicini A."/>
            <person name="Toppo S."/>
            <person name="Simionati B."/>
            <person name="Conrad A."/>
            <person name="Hornischer K."/>
            <person name="Kauer G."/>
            <person name="Loehnert T.-H."/>
            <person name="Nordsiek G."/>
            <person name="Reichelt J."/>
            <person name="Scharfe M."/>
            <person name="Schoen O."/>
            <person name="Bargues M."/>
            <person name="Terol J."/>
            <person name="Climent J."/>
            <person name="Navarro P."/>
            <person name="Collado C."/>
            <person name="Perez-Perez A."/>
            <person name="Ottenwaelder B."/>
            <person name="Duchemin D."/>
            <person name="Cooke R."/>
            <person name="Laudie M."/>
            <person name="Berger-Llauro C."/>
            <person name="Purnelle B."/>
            <person name="Masuy D."/>
            <person name="de Haan M."/>
            <person name="Maarse A.C."/>
            <person name="Alcaraz J.-P."/>
            <person name="Cottet A."/>
            <person name="Casacuberta E."/>
            <person name="Monfort A."/>
            <person name="Argiriou A."/>
            <person name="Flores M."/>
            <person name="Liguori R."/>
            <person name="Vitale D."/>
            <person name="Mannhaupt G."/>
            <person name="Haase D."/>
            <person name="Schoof H."/>
            <person name="Rudd S."/>
            <person name="Zaccaria P."/>
            <person name="Mewes H.-W."/>
            <person name="Mayer K.F.X."/>
            <person name="Kaul S."/>
            <person name="Town C.D."/>
            <person name="Koo H.L."/>
            <person name="Tallon L.J."/>
            <person name="Jenkins J."/>
            <person name="Rooney T."/>
            <person name="Rizzo M."/>
            <person name="Walts A."/>
            <person name="Utterback T."/>
            <person name="Fujii C.Y."/>
            <person name="Shea T.P."/>
            <person name="Creasy T.H."/>
            <person name="Haas B."/>
            <person name="Maiti R."/>
            <person name="Wu D."/>
            <person name="Peterson J."/>
            <person name="Van Aken S."/>
            <person name="Pai G."/>
            <person name="Militscher J."/>
            <person name="Sellers P."/>
            <person name="Gill J.E."/>
            <person name="Feldblyum T.V."/>
            <person name="Preuss D."/>
            <person name="Lin X."/>
            <person name="Nierman W.C."/>
            <person name="Salzberg S.L."/>
            <person name="White O."/>
            <person name="Venter J.C."/>
            <person name="Fraser C.M."/>
            <person name="Kaneko T."/>
            <person name="Nakamura Y."/>
            <person name="Sato S."/>
            <person name="Kato T."/>
            <person name="Asamizu E."/>
            <person name="Sasamoto S."/>
            <person name="Kimura T."/>
            <person name="Idesawa K."/>
            <person name="Kawashima K."/>
            <person name="Kishida Y."/>
            <person name="Kiyokawa C."/>
            <person name="Kohara M."/>
            <person name="Matsumoto M."/>
            <person name="Matsuno A."/>
            <person name="Muraki A."/>
            <person name="Nakayama S."/>
            <person name="Nakazaki N."/>
            <person name="Shinpo S."/>
            <person name="Takeuchi C."/>
            <person name="Wada T."/>
            <person name="Watanabe A."/>
            <person name="Yamada M."/>
            <person name="Yasuda M."/>
            <person name="Tabata S."/>
        </authorList>
    </citation>
    <scope>NUCLEOTIDE SEQUENCE [LARGE SCALE GENOMIC DNA]</scope>
    <source>
        <strain>cv. Columbia</strain>
    </source>
</reference>
<reference key="2">
    <citation type="journal article" date="2017" name="Plant J.">
        <title>Araport11: a complete reannotation of the Arabidopsis thaliana reference genome.</title>
        <authorList>
            <person name="Cheng C.Y."/>
            <person name="Krishnakumar V."/>
            <person name="Chan A.P."/>
            <person name="Thibaud-Nissen F."/>
            <person name="Schobel S."/>
            <person name="Town C.D."/>
        </authorList>
    </citation>
    <scope>GENOME REANNOTATION</scope>
    <source>
        <strain>cv. Columbia</strain>
    </source>
</reference>
<reference key="3">
    <citation type="journal article" date="2003" name="Science">
        <title>Empirical analysis of transcriptional activity in the Arabidopsis genome.</title>
        <authorList>
            <person name="Yamada K."/>
            <person name="Lim J."/>
            <person name="Dale J.M."/>
            <person name="Chen H."/>
            <person name="Shinn P."/>
            <person name="Palm C.J."/>
            <person name="Southwick A.M."/>
            <person name="Wu H.C."/>
            <person name="Kim C.J."/>
            <person name="Nguyen M."/>
            <person name="Pham P.K."/>
            <person name="Cheuk R.F."/>
            <person name="Karlin-Newmann G."/>
            <person name="Liu S.X."/>
            <person name="Lam B."/>
            <person name="Sakano H."/>
            <person name="Wu T."/>
            <person name="Yu G."/>
            <person name="Miranda M."/>
            <person name="Quach H.L."/>
            <person name="Tripp M."/>
            <person name="Chang C.H."/>
            <person name="Lee J.M."/>
            <person name="Toriumi M.J."/>
            <person name="Chan M.M."/>
            <person name="Tang C.C."/>
            <person name="Onodera C.S."/>
            <person name="Deng J.M."/>
            <person name="Akiyama K."/>
            <person name="Ansari Y."/>
            <person name="Arakawa T."/>
            <person name="Banh J."/>
            <person name="Banno F."/>
            <person name="Bowser L."/>
            <person name="Brooks S.Y."/>
            <person name="Carninci P."/>
            <person name="Chao Q."/>
            <person name="Choy N."/>
            <person name="Enju A."/>
            <person name="Goldsmith A.D."/>
            <person name="Gurjal M."/>
            <person name="Hansen N.F."/>
            <person name="Hayashizaki Y."/>
            <person name="Johnson-Hopson C."/>
            <person name="Hsuan V.W."/>
            <person name="Iida K."/>
            <person name="Karnes M."/>
            <person name="Khan S."/>
            <person name="Koesema E."/>
            <person name="Ishida J."/>
            <person name="Jiang P.X."/>
            <person name="Jones T."/>
            <person name="Kawai J."/>
            <person name="Kamiya A."/>
            <person name="Meyers C."/>
            <person name="Nakajima M."/>
            <person name="Narusaka M."/>
            <person name="Seki M."/>
            <person name="Sakurai T."/>
            <person name="Satou M."/>
            <person name="Tamse R."/>
            <person name="Vaysberg M."/>
            <person name="Wallender E.K."/>
            <person name="Wong C."/>
            <person name="Yamamura Y."/>
            <person name="Yuan S."/>
            <person name="Shinozaki K."/>
            <person name="Davis R.W."/>
            <person name="Theologis A."/>
            <person name="Ecker J.R."/>
        </authorList>
    </citation>
    <scope>NUCLEOTIDE SEQUENCE [LARGE SCALE MRNA] (ISOFORM 2)</scope>
    <source>
        <strain>cv. Columbia</strain>
    </source>
</reference>
<reference key="4">
    <citation type="journal article" date="2004" name="Plant Biotechnol. J.">
        <title>DEAD-box RNA helicases in Arabidopsis thaliana: establishing a link between quantitative expression, gene structure and evolution of a family of genes.</title>
        <authorList>
            <person name="Mingam A."/>
            <person name="Toffano-Nioche C."/>
            <person name="Brunaud V."/>
            <person name="Boudet N."/>
            <person name="Kreis M."/>
            <person name="Lecharny A."/>
        </authorList>
    </citation>
    <scope>GENE FAMILY</scope>
    <scope>NOMENCLATURE</scope>
</reference>
<reference key="5">
    <citation type="journal article" date="2013" name="PLoS ONE">
        <title>Genome-wide comparative in silico analysis of the RNA helicase gene family in Zea mays and Glycine max: a comparison with Arabidopsis and Oryza sativa.</title>
        <authorList>
            <person name="Xu R."/>
            <person name="Zhang S."/>
            <person name="Huang J."/>
            <person name="Zheng C."/>
        </authorList>
    </citation>
    <scope>GENE FAMILY</scope>
</reference>
<accession>Q3EBD3</accession>
<accession>Q8VZ85</accession>
<evidence type="ECO:0000255" key="1">
    <source>
        <dbReference type="PROSITE-ProRule" id="PRU00541"/>
    </source>
</evidence>
<evidence type="ECO:0000255" key="2">
    <source>
        <dbReference type="PROSITE-ProRule" id="PRU00542"/>
    </source>
</evidence>
<evidence type="ECO:0000303" key="3">
    <source>
    </source>
</evidence>
<evidence type="ECO:0000305" key="4"/>
<keyword id="KW-0025">Alternative splicing</keyword>
<keyword id="KW-0067">ATP-binding</keyword>
<keyword id="KW-0347">Helicase</keyword>
<keyword id="KW-0378">Hydrolase</keyword>
<keyword id="KW-0479">Metal-binding</keyword>
<keyword id="KW-0547">Nucleotide-binding</keyword>
<keyword id="KW-1185">Reference proteome</keyword>
<keyword id="KW-0694">RNA-binding</keyword>
<keyword id="KW-0862">Zinc</keyword>
<keyword id="KW-0863">Zinc-finger</keyword>
<sequence>MNEEGCVPHNSDVVKQKSIDQRAPLSGEPKCVICSRYGEYICDETNDDVCSLECKQALLRRVDSARVFPATDECFYVRDPGSSSHDAQLLRRKLDIHVQGQGSAVPPPVLTFTSCGLPPKLLLNLETAGYDFPTPIQMQAIPAALTGKSLLASADTGSGKTASFLVPIISRCTTYHSEHPSDQRRNPLAMVLAPTRELCVQVEDQAKMLGKGLPFKTALVVGGDPMSGQLYRIQQGVELIIGTPGRVVDLLSKHTIELDNIMTFVLDEVDCMLQRGFRDQVMQIFQALSQPQVLLFSATISREVEKVGGSLAKEIILVSIGNPNKPNKAVNQLAIWVDAKQKKQKLFDILRSQNHFKPPAVVYVSSRVGADLLANAITVVTGVKALSIHGEKPMKERRDVMGSFLGGEVPVLVSTGVLGRGVDLLVVRQVIVFDMPSTIKEYIHVIGRASRMGEKGTAIVFVNEDDRNLFPDLVAALKSSGAAIPKELINLTSREMHNKKRRVGY</sequence>